<organism>
    <name type="scientific">Burkholderia pseudomallei (strain K96243)</name>
    <dbReference type="NCBI Taxonomy" id="272560"/>
    <lineage>
        <taxon>Bacteria</taxon>
        <taxon>Pseudomonadati</taxon>
        <taxon>Pseudomonadota</taxon>
        <taxon>Betaproteobacteria</taxon>
        <taxon>Burkholderiales</taxon>
        <taxon>Burkholderiaceae</taxon>
        <taxon>Burkholderia</taxon>
        <taxon>pseudomallei group</taxon>
    </lineage>
</organism>
<dbReference type="EC" id="2.4.2.7" evidence="1"/>
<dbReference type="EMBL" id="BX571965">
    <property type="protein sequence ID" value="CAH34529.1"/>
    <property type="molecule type" value="Genomic_DNA"/>
</dbReference>
<dbReference type="RefSeq" id="WP_004534111.1">
    <property type="nucleotide sequence ID" value="NZ_CP009538.1"/>
</dbReference>
<dbReference type="RefSeq" id="YP_107165.1">
    <property type="nucleotide sequence ID" value="NC_006350.1"/>
</dbReference>
<dbReference type="SMR" id="Q63XK0"/>
<dbReference type="STRING" id="272560.BPSL0540"/>
<dbReference type="KEGG" id="bps:BPSL0540"/>
<dbReference type="PATRIC" id="fig|272560.6.peg.604"/>
<dbReference type="eggNOG" id="COG0503">
    <property type="taxonomic scope" value="Bacteria"/>
</dbReference>
<dbReference type="UniPathway" id="UPA00588">
    <property type="reaction ID" value="UER00646"/>
</dbReference>
<dbReference type="Proteomes" id="UP000000605">
    <property type="component" value="Chromosome 1"/>
</dbReference>
<dbReference type="GO" id="GO:0005737">
    <property type="term" value="C:cytoplasm"/>
    <property type="evidence" value="ECO:0007669"/>
    <property type="project" value="UniProtKB-SubCell"/>
</dbReference>
<dbReference type="GO" id="GO:0002055">
    <property type="term" value="F:adenine binding"/>
    <property type="evidence" value="ECO:0007669"/>
    <property type="project" value="TreeGrafter"/>
</dbReference>
<dbReference type="GO" id="GO:0003999">
    <property type="term" value="F:adenine phosphoribosyltransferase activity"/>
    <property type="evidence" value="ECO:0007669"/>
    <property type="project" value="UniProtKB-UniRule"/>
</dbReference>
<dbReference type="GO" id="GO:0016208">
    <property type="term" value="F:AMP binding"/>
    <property type="evidence" value="ECO:0007669"/>
    <property type="project" value="TreeGrafter"/>
</dbReference>
<dbReference type="GO" id="GO:0006168">
    <property type="term" value="P:adenine salvage"/>
    <property type="evidence" value="ECO:0007669"/>
    <property type="project" value="InterPro"/>
</dbReference>
<dbReference type="GO" id="GO:0044209">
    <property type="term" value="P:AMP salvage"/>
    <property type="evidence" value="ECO:0007669"/>
    <property type="project" value="UniProtKB-UniRule"/>
</dbReference>
<dbReference type="GO" id="GO:0006166">
    <property type="term" value="P:purine ribonucleoside salvage"/>
    <property type="evidence" value="ECO:0007669"/>
    <property type="project" value="UniProtKB-KW"/>
</dbReference>
<dbReference type="CDD" id="cd06223">
    <property type="entry name" value="PRTases_typeI"/>
    <property type="match status" value="1"/>
</dbReference>
<dbReference type="FunFam" id="3.40.50.2020:FF:000021">
    <property type="entry name" value="Adenine phosphoribosyltransferase"/>
    <property type="match status" value="1"/>
</dbReference>
<dbReference type="Gene3D" id="3.40.50.2020">
    <property type="match status" value="1"/>
</dbReference>
<dbReference type="HAMAP" id="MF_00004">
    <property type="entry name" value="Aden_phosphoribosyltr"/>
    <property type="match status" value="1"/>
</dbReference>
<dbReference type="InterPro" id="IPR005764">
    <property type="entry name" value="Ade_phspho_trans"/>
</dbReference>
<dbReference type="InterPro" id="IPR000836">
    <property type="entry name" value="PRibTrfase_dom"/>
</dbReference>
<dbReference type="InterPro" id="IPR029057">
    <property type="entry name" value="PRTase-like"/>
</dbReference>
<dbReference type="InterPro" id="IPR050054">
    <property type="entry name" value="UPRTase/APRTase"/>
</dbReference>
<dbReference type="NCBIfam" id="TIGR01090">
    <property type="entry name" value="apt"/>
    <property type="match status" value="1"/>
</dbReference>
<dbReference type="NCBIfam" id="NF002634">
    <property type="entry name" value="PRK02304.1-3"/>
    <property type="match status" value="1"/>
</dbReference>
<dbReference type="NCBIfam" id="NF002636">
    <property type="entry name" value="PRK02304.1-5"/>
    <property type="match status" value="1"/>
</dbReference>
<dbReference type="PANTHER" id="PTHR32315">
    <property type="entry name" value="ADENINE PHOSPHORIBOSYLTRANSFERASE"/>
    <property type="match status" value="1"/>
</dbReference>
<dbReference type="PANTHER" id="PTHR32315:SF3">
    <property type="entry name" value="ADENINE PHOSPHORIBOSYLTRANSFERASE"/>
    <property type="match status" value="1"/>
</dbReference>
<dbReference type="Pfam" id="PF00156">
    <property type="entry name" value="Pribosyltran"/>
    <property type="match status" value="1"/>
</dbReference>
<dbReference type="SUPFAM" id="SSF53271">
    <property type="entry name" value="PRTase-like"/>
    <property type="match status" value="1"/>
</dbReference>
<dbReference type="PROSITE" id="PS00103">
    <property type="entry name" value="PUR_PYR_PR_TRANSFER"/>
    <property type="match status" value="1"/>
</dbReference>
<proteinExistence type="inferred from homology"/>
<protein>
    <recommendedName>
        <fullName evidence="1">Adenine phosphoribosyltransferase</fullName>
        <shortName evidence="1">APRT</shortName>
        <ecNumber evidence="1">2.4.2.7</ecNumber>
    </recommendedName>
</protein>
<sequence>MMSTSDAPLDPVEFIHSRIRTVPDWPQPGVMFRDITPLLQSAKALRVLVDLFVERYVDAKLDYIAGLDARGFIIAPIVAYELSVGFVPIRKVGKLPYATQRESYALEYGTATVEIHEDACKPGDRVVIVDDLIATGGTMMAGKNLLERLGAVVVEGAAIVDLPDLGGSALLRGAGLPLYTVTEFPGH</sequence>
<feature type="chain" id="PRO_0000149366" description="Adenine phosphoribosyltransferase">
    <location>
        <begin position="1"/>
        <end position="187"/>
    </location>
</feature>
<comment type="function">
    <text evidence="1">Catalyzes a salvage reaction resulting in the formation of AMP, that is energically less costly than de novo synthesis.</text>
</comment>
<comment type="catalytic activity">
    <reaction evidence="1">
        <text>AMP + diphosphate = 5-phospho-alpha-D-ribose 1-diphosphate + adenine</text>
        <dbReference type="Rhea" id="RHEA:16609"/>
        <dbReference type="ChEBI" id="CHEBI:16708"/>
        <dbReference type="ChEBI" id="CHEBI:33019"/>
        <dbReference type="ChEBI" id="CHEBI:58017"/>
        <dbReference type="ChEBI" id="CHEBI:456215"/>
        <dbReference type="EC" id="2.4.2.7"/>
    </reaction>
</comment>
<comment type="pathway">
    <text evidence="1">Purine metabolism; AMP biosynthesis via salvage pathway; AMP from adenine: step 1/1.</text>
</comment>
<comment type="subunit">
    <text evidence="1">Homodimer.</text>
</comment>
<comment type="subcellular location">
    <subcellularLocation>
        <location evidence="1">Cytoplasm</location>
    </subcellularLocation>
</comment>
<comment type="similarity">
    <text evidence="1">Belongs to the purine/pyrimidine phosphoribosyltransferase family.</text>
</comment>
<keyword id="KW-0963">Cytoplasm</keyword>
<keyword id="KW-0328">Glycosyltransferase</keyword>
<keyword id="KW-0660">Purine salvage</keyword>
<keyword id="KW-1185">Reference proteome</keyword>
<keyword id="KW-0808">Transferase</keyword>
<gene>
    <name evidence="1" type="primary">apt</name>
    <name type="ordered locus">BPSL0540</name>
</gene>
<name>APT_BURPS</name>
<accession>Q63XK0</accession>
<reference key="1">
    <citation type="journal article" date="2004" name="Proc. Natl. Acad. Sci. U.S.A.">
        <title>Genomic plasticity of the causative agent of melioidosis, Burkholderia pseudomallei.</title>
        <authorList>
            <person name="Holden M.T.G."/>
            <person name="Titball R.W."/>
            <person name="Peacock S.J."/>
            <person name="Cerdeno-Tarraga A.-M."/>
            <person name="Atkins T."/>
            <person name="Crossman L.C."/>
            <person name="Pitt T."/>
            <person name="Churcher C."/>
            <person name="Mungall K.L."/>
            <person name="Bentley S.D."/>
            <person name="Sebaihia M."/>
            <person name="Thomson N.R."/>
            <person name="Bason N."/>
            <person name="Beacham I.R."/>
            <person name="Brooks K."/>
            <person name="Brown K.A."/>
            <person name="Brown N.F."/>
            <person name="Challis G.L."/>
            <person name="Cherevach I."/>
            <person name="Chillingworth T."/>
            <person name="Cronin A."/>
            <person name="Crossett B."/>
            <person name="Davis P."/>
            <person name="DeShazer D."/>
            <person name="Feltwell T."/>
            <person name="Fraser A."/>
            <person name="Hance Z."/>
            <person name="Hauser H."/>
            <person name="Holroyd S."/>
            <person name="Jagels K."/>
            <person name="Keith K.E."/>
            <person name="Maddison M."/>
            <person name="Moule S."/>
            <person name="Price C."/>
            <person name="Quail M.A."/>
            <person name="Rabbinowitsch E."/>
            <person name="Rutherford K."/>
            <person name="Sanders M."/>
            <person name="Simmonds M."/>
            <person name="Songsivilai S."/>
            <person name="Stevens K."/>
            <person name="Tumapa S."/>
            <person name="Vesaratchavest M."/>
            <person name="Whitehead S."/>
            <person name="Yeats C."/>
            <person name="Barrell B.G."/>
            <person name="Oyston P.C.F."/>
            <person name="Parkhill J."/>
        </authorList>
    </citation>
    <scope>NUCLEOTIDE SEQUENCE [LARGE SCALE GENOMIC DNA]</scope>
    <source>
        <strain>K96243</strain>
    </source>
</reference>
<evidence type="ECO:0000255" key="1">
    <source>
        <dbReference type="HAMAP-Rule" id="MF_00004"/>
    </source>
</evidence>